<gene>
    <name type="primary">TFB5</name>
    <name type="ordered locus">YDR079C-A</name>
</gene>
<reference key="1">
    <citation type="journal article" date="1997" name="Nature">
        <title>The nucleotide sequence of Saccharomyces cerevisiae chromosome IV.</title>
        <authorList>
            <person name="Jacq C."/>
            <person name="Alt-Moerbe J."/>
            <person name="Andre B."/>
            <person name="Arnold W."/>
            <person name="Bahr A."/>
            <person name="Ballesta J.P.G."/>
            <person name="Bargues M."/>
            <person name="Baron L."/>
            <person name="Becker A."/>
            <person name="Biteau N."/>
            <person name="Bloecker H."/>
            <person name="Blugeon C."/>
            <person name="Boskovic J."/>
            <person name="Brandt P."/>
            <person name="Brueckner M."/>
            <person name="Buitrago M.J."/>
            <person name="Coster F."/>
            <person name="Delaveau T."/>
            <person name="del Rey F."/>
            <person name="Dujon B."/>
            <person name="Eide L.G."/>
            <person name="Garcia-Cantalejo J.M."/>
            <person name="Goffeau A."/>
            <person name="Gomez-Peris A."/>
            <person name="Granotier C."/>
            <person name="Hanemann V."/>
            <person name="Hankeln T."/>
            <person name="Hoheisel J.D."/>
            <person name="Jaeger W."/>
            <person name="Jimenez A."/>
            <person name="Jonniaux J.-L."/>
            <person name="Kraemer C."/>
            <person name="Kuester H."/>
            <person name="Laamanen P."/>
            <person name="Legros Y."/>
            <person name="Louis E.J."/>
            <person name="Moeller-Rieker S."/>
            <person name="Monnet A."/>
            <person name="Moro M."/>
            <person name="Mueller-Auer S."/>
            <person name="Nussbaumer B."/>
            <person name="Paricio N."/>
            <person name="Paulin L."/>
            <person name="Perea J."/>
            <person name="Perez-Alonso M."/>
            <person name="Perez-Ortin J.E."/>
            <person name="Pohl T.M."/>
            <person name="Prydz H."/>
            <person name="Purnelle B."/>
            <person name="Rasmussen S.W."/>
            <person name="Remacha M.A."/>
            <person name="Revuelta J.L."/>
            <person name="Rieger M."/>
            <person name="Salom D."/>
            <person name="Saluz H.P."/>
            <person name="Saiz J.E."/>
            <person name="Saren A.-M."/>
            <person name="Schaefer M."/>
            <person name="Scharfe M."/>
            <person name="Schmidt E.R."/>
            <person name="Schneider C."/>
            <person name="Scholler P."/>
            <person name="Schwarz S."/>
            <person name="Soler-Mira A."/>
            <person name="Urrestarazu L.A."/>
            <person name="Verhasselt P."/>
            <person name="Vissers S."/>
            <person name="Voet M."/>
            <person name="Volckaert G."/>
            <person name="Wagner G."/>
            <person name="Wambutt R."/>
            <person name="Wedler E."/>
            <person name="Wedler H."/>
            <person name="Woelfl S."/>
            <person name="Harris D.E."/>
            <person name="Bowman S."/>
            <person name="Brown D."/>
            <person name="Churcher C.M."/>
            <person name="Connor R."/>
            <person name="Dedman K."/>
            <person name="Gentles S."/>
            <person name="Hamlin N."/>
            <person name="Hunt S."/>
            <person name="Jones L."/>
            <person name="McDonald S."/>
            <person name="Murphy L.D."/>
            <person name="Niblett D."/>
            <person name="Odell C."/>
            <person name="Oliver K."/>
            <person name="Rajandream M.A."/>
            <person name="Richards C."/>
            <person name="Shore L."/>
            <person name="Walsh S.V."/>
            <person name="Barrell B.G."/>
            <person name="Dietrich F.S."/>
            <person name="Mulligan J.T."/>
            <person name="Allen E."/>
            <person name="Araujo R."/>
            <person name="Aviles E."/>
            <person name="Berno A."/>
            <person name="Carpenter J."/>
            <person name="Chen E."/>
            <person name="Cherry J.M."/>
            <person name="Chung E."/>
            <person name="Duncan M."/>
            <person name="Hunicke-Smith S."/>
            <person name="Hyman R.W."/>
            <person name="Komp C."/>
            <person name="Lashkari D."/>
            <person name="Lew H."/>
            <person name="Lin D."/>
            <person name="Mosedale D."/>
            <person name="Nakahara K."/>
            <person name="Namath A."/>
            <person name="Oefner P."/>
            <person name="Oh C."/>
            <person name="Petel F.X."/>
            <person name="Roberts D."/>
            <person name="Schramm S."/>
            <person name="Schroeder M."/>
            <person name="Shogren T."/>
            <person name="Shroff N."/>
            <person name="Winant A."/>
            <person name="Yelton M.A."/>
            <person name="Botstein D."/>
            <person name="Davis R.W."/>
            <person name="Johnston M."/>
            <person name="Andrews S."/>
            <person name="Brinkman R."/>
            <person name="Cooper J."/>
            <person name="Ding H."/>
            <person name="Du Z."/>
            <person name="Favello A."/>
            <person name="Fulton L."/>
            <person name="Gattung S."/>
            <person name="Greco T."/>
            <person name="Hallsworth K."/>
            <person name="Hawkins J."/>
            <person name="Hillier L.W."/>
            <person name="Jier M."/>
            <person name="Johnson D."/>
            <person name="Johnston L."/>
            <person name="Kirsten J."/>
            <person name="Kucaba T."/>
            <person name="Langston Y."/>
            <person name="Latreille P."/>
            <person name="Le T."/>
            <person name="Mardis E."/>
            <person name="Menezes S."/>
            <person name="Miller N."/>
            <person name="Nhan M."/>
            <person name="Pauley A."/>
            <person name="Peluso D."/>
            <person name="Rifkin L."/>
            <person name="Riles L."/>
            <person name="Taich A."/>
            <person name="Trevaskis E."/>
            <person name="Vignati D."/>
            <person name="Wilcox L."/>
            <person name="Wohldman P."/>
            <person name="Vaudin M."/>
            <person name="Wilson R."/>
            <person name="Waterston R."/>
            <person name="Albermann K."/>
            <person name="Hani J."/>
            <person name="Heumann K."/>
            <person name="Kleine K."/>
            <person name="Mewes H.-W."/>
            <person name="Zollner A."/>
            <person name="Zaccaria P."/>
        </authorList>
    </citation>
    <scope>NUCLEOTIDE SEQUENCE [LARGE SCALE GENOMIC DNA]</scope>
    <source>
        <strain>ATCC 204508 / S288c</strain>
    </source>
</reference>
<reference key="2">
    <citation type="journal article" date="2014" name="G3 (Bethesda)">
        <title>The reference genome sequence of Saccharomyces cerevisiae: Then and now.</title>
        <authorList>
            <person name="Engel S.R."/>
            <person name="Dietrich F.S."/>
            <person name="Fisk D.G."/>
            <person name="Binkley G."/>
            <person name="Balakrishnan R."/>
            <person name="Costanzo M.C."/>
            <person name="Dwight S.S."/>
            <person name="Hitz B.C."/>
            <person name="Karra K."/>
            <person name="Nash R.S."/>
            <person name="Weng S."/>
            <person name="Wong E.D."/>
            <person name="Lloyd P."/>
            <person name="Skrzypek M.S."/>
            <person name="Miyasato S.R."/>
            <person name="Simison M."/>
            <person name="Cherry J.M."/>
        </authorList>
    </citation>
    <scope>GENOME REANNOTATION</scope>
    <source>
        <strain>ATCC 204508 / S288c</strain>
    </source>
</reference>
<reference key="3">
    <citation type="journal article" date="2004" name="Nat. Genet.">
        <title>Identification of TFB5, a new component of general transcription and DNA repair factor IIH.</title>
        <authorList>
            <person name="Ranish J.A."/>
            <person name="Hahn S."/>
            <person name="Lu Y."/>
            <person name="Yi E.C."/>
            <person name="Li X.-J."/>
            <person name="Eng J."/>
            <person name="Aebersold R."/>
        </authorList>
    </citation>
    <scope>PROTEIN SEQUENCE OF 6-17</scope>
    <scope>IDENTIFICATION IN THE TFIIH CORE COMPLEX</scope>
</reference>
<reference key="4">
    <citation type="journal article" date="1994" name="J. Biol. Chem.">
        <title>RNA polymerase transcription factor IIH holoenzyme from yeast.</title>
        <authorList>
            <person name="Svejstrup J.Q."/>
            <person name="Feaver W.J."/>
            <person name="LaPointe J."/>
            <person name="Kornberg R.D."/>
        </authorList>
    </citation>
    <scope>FUNCTION OF TFIIH IN RNA POLYMERASE II TRANSCRIPTION</scope>
</reference>
<reference key="5">
    <citation type="journal article" date="1996" name="J. Biol. Chem.">
        <title>Reconstitution of TFIIH and requirement of its DNA helicase subunits, Rad3 and Rad25, in the incision step of nucleotide excision repair.</title>
        <authorList>
            <person name="Sung P."/>
            <person name="Guzder S.N."/>
            <person name="Prakash L."/>
            <person name="Prakash S."/>
        </authorList>
    </citation>
    <scope>FUNCTION OF THE TFIIH CORE COMPLEX IN DNA REPAIR</scope>
</reference>
<reference key="6">
    <citation type="journal article" date="2003" name="Nature">
        <title>Global analysis of protein localization in budding yeast.</title>
        <authorList>
            <person name="Huh W.-K."/>
            <person name="Falvo J.V."/>
            <person name="Gerke L.C."/>
            <person name="Carroll A.S."/>
            <person name="Howson R.W."/>
            <person name="Weissman J.S."/>
            <person name="O'Shea E.K."/>
        </authorList>
    </citation>
    <scope>SUBCELLULAR LOCATION [LARGE SCALE ANALYSIS]</scope>
</reference>
<reference key="7">
    <citation type="journal article" date="2012" name="Proc. Natl. Acad. Sci. U.S.A.">
        <title>Tfb6, a previously unidentified subunit of the general transcription factor TFIIH, facilitates dissociation of Ssl2 helicase after transcription initiation.</title>
        <authorList>
            <person name="Murakami K."/>
            <person name="Gibbons B.J."/>
            <person name="Davis R.E."/>
            <person name="Nagai S."/>
            <person name="Liu X."/>
            <person name="Robinson P.J."/>
            <person name="Wu T."/>
            <person name="Kaplan C.D."/>
            <person name="Kornberg R.D."/>
        </authorList>
    </citation>
    <scope>IDENTIFICATION BY MASS SPECTROMETRY</scope>
    <scope>SUBUNIT</scope>
</reference>
<reference key="8">
    <citation type="journal article" date="2008" name="Nat. Struct. Mol. Biol.">
        <title>Structural basis for group A trichothiodystrophy.</title>
        <authorList>
            <person name="Kainov D.E."/>
            <person name="Vitorino M."/>
            <person name="Cavarelli J."/>
            <person name="Poterszman A."/>
            <person name="Egly J.M."/>
        </authorList>
    </citation>
    <scope>X-RAY CRYSTALLOGRAPHY (1.80 ANGSTROMS) OF 2-72</scope>
    <scope>INTERACTION WITH TFB2</scope>
</reference>
<reference key="9">
    <citation type="journal article" date="2015" name="Proc. Natl. Acad. Sci. U.S.A.">
        <title>Structure of an RNA polymerase II preinitiation complex.</title>
        <authorList>
            <person name="Murakami K."/>
            <person name="Tsai K.L."/>
            <person name="Kalisman N."/>
            <person name="Bushnell D.A."/>
            <person name="Asturias F.J."/>
            <person name="Kornberg R.D."/>
        </authorList>
    </citation>
    <scope>STRUCTURE BY ELECTRON MICROSCOPY (6.00 ANGSTROMS) OF 2-64</scope>
</reference>
<reference key="10">
    <citation type="journal article" date="2016" name="Cell">
        <title>Structure of a complete mediator-RNA polymerase II pre-initiation complex.</title>
        <authorList>
            <person name="Robinson P.J."/>
            <person name="Trnka M.J."/>
            <person name="Bushnell D.A."/>
            <person name="Davis R.E."/>
            <person name="Mattei P.J."/>
            <person name="Burlingame A.L."/>
            <person name="Kornberg R.D."/>
        </authorList>
    </citation>
    <scope>STRUCTURE BY ELECTRON MICROSCOPY (15.30 ANGSTROMS)</scope>
</reference>
<sequence length="72" mass="8232">MARARKGALVQCDPSIKALILQIDAKMSDIVLEELDDTHLLVNPSKVEFVKHELNRLLSKNIYNPMDEEENQ</sequence>
<keyword id="KW-0002">3D-structure</keyword>
<keyword id="KW-0903">Direct protein sequencing</keyword>
<keyword id="KW-0227">DNA damage</keyword>
<keyword id="KW-0234">DNA repair</keyword>
<keyword id="KW-0539">Nucleus</keyword>
<keyword id="KW-1185">Reference proteome</keyword>
<keyword id="KW-0804">Transcription</keyword>
<keyword id="KW-0805">Transcription regulation</keyword>
<evidence type="ECO:0000269" key="1">
    <source>
    </source>
</evidence>
<evidence type="ECO:0000269" key="2">
    <source>
    </source>
</evidence>
<evidence type="ECO:0000269" key="3">
    <source>
    </source>
</evidence>
<evidence type="ECO:0000269" key="4">
    <source>
    </source>
</evidence>
<evidence type="ECO:0000269" key="5">
    <source>
    </source>
</evidence>
<evidence type="ECO:0000269" key="6">
    <source>
    </source>
</evidence>
<evidence type="ECO:0000305" key="7"/>
<evidence type="ECO:0007829" key="8">
    <source>
        <dbReference type="PDB" id="3DGP"/>
    </source>
</evidence>
<protein>
    <recommendedName>
        <fullName>General transcription and DNA repair factor IIH subunit TFB5</fullName>
        <shortName>TFIIH subunit TFB5</shortName>
    </recommendedName>
    <alternativeName>
        <fullName>RNA polymerase II transcription factor B subunit 5</fullName>
    </alternativeName>
</protein>
<organism>
    <name type="scientific">Saccharomyces cerevisiae (strain ATCC 204508 / S288c)</name>
    <name type="common">Baker's yeast</name>
    <dbReference type="NCBI Taxonomy" id="559292"/>
    <lineage>
        <taxon>Eukaryota</taxon>
        <taxon>Fungi</taxon>
        <taxon>Dikarya</taxon>
        <taxon>Ascomycota</taxon>
        <taxon>Saccharomycotina</taxon>
        <taxon>Saccharomycetes</taxon>
        <taxon>Saccharomycetales</taxon>
        <taxon>Saccharomycetaceae</taxon>
        <taxon>Saccharomyces</taxon>
    </lineage>
</organism>
<proteinExistence type="evidence at protein level"/>
<dbReference type="EMBL" id="Z74376">
    <property type="status" value="NOT_ANNOTATED_CDS"/>
    <property type="molecule type" value="Genomic_DNA"/>
</dbReference>
<dbReference type="EMBL" id="BK006938">
    <property type="protein sequence ID" value="DAA11926.1"/>
    <property type="molecule type" value="Genomic_DNA"/>
</dbReference>
<dbReference type="RefSeq" id="NP_076886.3">
    <property type="nucleotide sequence ID" value="NM_001184469.3"/>
</dbReference>
<dbReference type="PDB" id="3DGP">
    <property type="method" value="X-ray"/>
    <property type="resolution" value="1.80 A"/>
    <property type="chains" value="B=2-72"/>
</dbReference>
<dbReference type="PDB" id="3DOM">
    <property type="method" value="X-ray"/>
    <property type="resolution" value="2.60 A"/>
    <property type="chains" value="B/D=2-72"/>
</dbReference>
<dbReference type="PDB" id="5FMF">
    <property type="method" value="EM"/>
    <property type="resolution" value="6.00 A"/>
    <property type="chains" value="X=2-64"/>
</dbReference>
<dbReference type="PDB" id="5OQJ">
    <property type="method" value="EM"/>
    <property type="resolution" value="4.70 A"/>
    <property type="chains" value="5=1-72"/>
</dbReference>
<dbReference type="PDB" id="5OQM">
    <property type="method" value="EM"/>
    <property type="resolution" value="5.80 A"/>
    <property type="chains" value="5=1-72"/>
</dbReference>
<dbReference type="PDB" id="5SVA">
    <property type="method" value="EM"/>
    <property type="resolution" value="15.30 A"/>
    <property type="chains" value="b=1-72"/>
</dbReference>
<dbReference type="PDB" id="6GYM">
    <property type="method" value="EM"/>
    <property type="resolution" value="6.70 A"/>
    <property type="chains" value="5=1-72"/>
</dbReference>
<dbReference type="PDB" id="7K01">
    <property type="method" value="EM"/>
    <property type="resolution" value="3.90 A"/>
    <property type="chains" value="5=1-72"/>
</dbReference>
<dbReference type="PDB" id="7K04">
    <property type="method" value="EM"/>
    <property type="resolution" value="9.25 A"/>
    <property type="chains" value="5=1-72"/>
</dbReference>
<dbReference type="PDB" id="7M2U">
    <property type="method" value="EM"/>
    <property type="resolution" value="8.20 A"/>
    <property type="chains" value="5=2-67"/>
</dbReference>
<dbReference type="PDB" id="7ML0">
    <property type="method" value="EM"/>
    <property type="resolution" value="3.00 A"/>
    <property type="chains" value="5=1-72"/>
</dbReference>
<dbReference type="PDB" id="7ML1">
    <property type="method" value="EM"/>
    <property type="resolution" value="4.00 A"/>
    <property type="chains" value="5=1-72"/>
</dbReference>
<dbReference type="PDB" id="7ML2">
    <property type="method" value="EM"/>
    <property type="resolution" value="3.40 A"/>
    <property type="chains" value="5=1-72"/>
</dbReference>
<dbReference type="PDB" id="7ML3">
    <property type="method" value="EM"/>
    <property type="resolution" value="7.60 A"/>
    <property type="chains" value="5=1-72"/>
</dbReference>
<dbReference type="PDB" id="7ML4">
    <property type="method" value="EM"/>
    <property type="resolution" value="3.10 A"/>
    <property type="chains" value="5=1-72"/>
</dbReference>
<dbReference type="PDB" id="7O4I">
    <property type="method" value="EM"/>
    <property type="resolution" value="3.20 A"/>
    <property type="chains" value="5=1-72"/>
</dbReference>
<dbReference type="PDB" id="7O4J">
    <property type="method" value="EM"/>
    <property type="resolution" value="2.90 A"/>
    <property type="chains" value="5=1-72"/>
</dbReference>
<dbReference type="PDB" id="7O4K">
    <property type="method" value="EM"/>
    <property type="resolution" value="3.60 A"/>
    <property type="chains" value="5=1-72"/>
</dbReference>
<dbReference type="PDB" id="7O4L">
    <property type="method" value="EM"/>
    <property type="resolution" value="3.40 A"/>
    <property type="chains" value="5=1-72"/>
</dbReference>
<dbReference type="PDB" id="7O72">
    <property type="method" value="EM"/>
    <property type="resolution" value="3.40 A"/>
    <property type="chains" value="5=1-72"/>
</dbReference>
<dbReference type="PDB" id="7O73">
    <property type="method" value="EM"/>
    <property type="resolution" value="3.40 A"/>
    <property type="chains" value="5=1-72"/>
</dbReference>
<dbReference type="PDB" id="7O75">
    <property type="method" value="EM"/>
    <property type="resolution" value="3.20 A"/>
    <property type="chains" value="5=1-72"/>
</dbReference>
<dbReference type="PDB" id="7ZS9">
    <property type="method" value="EM"/>
    <property type="resolution" value="3.10 A"/>
    <property type="chains" value="5=1-72"/>
</dbReference>
<dbReference type="PDB" id="7ZSA">
    <property type="method" value="EM"/>
    <property type="resolution" value="4.00 A"/>
    <property type="chains" value="5=1-72"/>
</dbReference>
<dbReference type="PDB" id="7ZSB">
    <property type="method" value="EM"/>
    <property type="resolution" value="6.60 A"/>
    <property type="chains" value="5=1-72"/>
</dbReference>
<dbReference type="PDB" id="8CEN">
    <property type="method" value="EM"/>
    <property type="resolution" value="3.00 A"/>
    <property type="chains" value="5=1-72"/>
</dbReference>
<dbReference type="PDB" id="8CEO">
    <property type="method" value="EM"/>
    <property type="resolution" value="3.60 A"/>
    <property type="chains" value="5=1-72"/>
</dbReference>
<dbReference type="PDB" id="8UMH">
    <property type="method" value="EM"/>
    <property type="resolution" value="4.10 A"/>
    <property type="chains" value="5=1-72"/>
</dbReference>
<dbReference type="PDB" id="8UMI">
    <property type="method" value="EM"/>
    <property type="resolution" value="3.70 A"/>
    <property type="chains" value="5=1-72"/>
</dbReference>
<dbReference type="PDB" id="8UOQ">
    <property type="method" value="EM"/>
    <property type="resolution" value="3.80 A"/>
    <property type="chains" value="5=1-72"/>
</dbReference>
<dbReference type="PDB" id="8UOT">
    <property type="method" value="EM"/>
    <property type="resolution" value="3.70 A"/>
    <property type="chains" value="5=1-72"/>
</dbReference>
<dbReference type="PDBsum" id="3DGP"/>
<dbReference type="PDBsum" id="3DOM"/>
<dbReference type="PDBsum" id="5FMF"/>
<dbReference type="PDBsum" id="5OQJ"/>
<dbReference type="PDBsum" id="5OQM"/>
<dbReference type="PDBsum" id="5SVA"/>
<dbReference type="PDBsum" id="6GYM"/>
<dbReference type="PDBsum" id="7K01"/>
<dbReference type="PDBsum" id="7K04"/>
<dbReference type="PDBsum" id="7M2U"/>
<dbReference type="PDBsum" id="7ML0"/>
<dbReference type="PDBsum" id="7ML1"/>
<dbReference type="PDBsum" id="7ML2"/>
<dbReference type="PDBsum" id="7ML3"/>
<dbReference type="PDBsum" id="7ML4"/>
<dbReference type="PDBsum" id="7O4I"/>
<dbReference type="PDBsum" id="7O4J"/>
<dbReference type="PDBsum" id="7O4K"/>
<dbReference type="PDBsum" id="7O4L"/>
<dbReference type="PDBsum" id="7O72"/>
<dbReference type="PDBsum" id="7O73"/>
<dbReference type="PDBsum" id="7O75"/>
<dbReference type="PDBsum" id="7ZS9"/>
<dbReference type="PDBsum" id="7ZSA"/>
<dbReference type="PDBsum" id="7ZSB"/>
<dbReference type="PDBsum" id="8CEN"/>
<dbReference type="PDBsum" id="8CEO"/>
<dbReference type="PDBsum" id="8UMH"/>
<dbReference type="PDBsum" id="8UMI"/>
<dbReference type="PDBsum" id="8UOQ"/>
<dbReference type="PDBsum" id="8UOT"/>
<dbReference type="EMDB" id="EMD-0092"/>
<dbReference type="EMDB" id="EMD-12719"/>
<dbReference type="EMDB" id="EMD-12720"/>
<dbReference type="EMDB" id="EMD-12721"/>
<dbReference type="EMDB" id="EMD-12722"/>
<dbReference type="EMDB" id="EMD-12743"/>
<dbReference type="EMDB" id="EMD-12744"/>
<dbReference type="EMDB" id="EMD-12745"/>
<dbReference type="EMDB" id="EMD-14927"/>
<dbReference type="EMDB" id="EMD-14928"/>
<dbReference type="EMDB" id="EMD-14929"/>
<dbReference type="EMDB" id="EMD-22587"/>
<dbReference type="EMDB" id="EMD-22588"/>
<dbReference type="EMDB" id="EMD-23904"/>
<dbReference type="EMDB" id="EMD-23905"/>
<dbReference type="EMDB" id="EMD-23906"/>
<dbReference type="EMDB" id="EMD-23907"/>
<dbReference type="EMDB" id="EMD-23908"/>
<dbReference type="EMDB" id="EMD-3846"/>
<dbReference type="EMDB" id="EMD-3850"/>
<dbReference type="EMDB" id="EMD-42379"/>
<dbReference type="EMDB" id="EMD-42380"/>
<dbReference type="EMDB" id="EMD-42437"/>
<dbReference type="EMDB" id="EMD-42438"/>
<dbReference type="SMR" id="Q3E7C1"/>
<dbReference type="BioGRID" id="32135">
    <property type="interactions" value="214"/>
</dbReference>
<dbReference type="ComplexPortal" id="CPX-1659">
    <property type="entry name" value="General transcription factor TFIIH complex"/>
</dbReference>
<dbReference type="DIP" id="DIP-48375N"/>
<dbReference type="FunCoup" id="Q3E7C1">
    <property type="interactions" value="189"/>
</dbReference>
<dbReference type="IntAct" id="Q3E7C1">
    <property type="interactions" value="10"/>
</dbReference>
<dbReference type="MINT" id="Q3E7C1"/>
<dbReference type="STRING" id="4932.YDR079C-A"/>
<dbReference type="iPTMnet" id="Q3E7C1"/>
<dbReference type="PaxDb" id="4932-YDR079C-A"/>
<dbReference type="PeptideAtlas" id="Q3E7C1"/>
<dbReference type="EnsemblFungi" id="YDR079C-A_mRNA">
    <property type="protein sequence ID" value="YDR079C-A"/>
    <property type="gene ID" value="YDR079C-A"/>
</dbReference>
<dbReference type="GeneID" id="851652"/>
<dbReference type="KEGG" id="sce:YDR079C-A"/>
<dbReference type="AGR" id="SGD:S000007603"/>
<dbReference type="SGD" id="S000007603">
    <property type="gene designation" value="TFB5"/>
</dbReference>
<dbReference type="VEuPathDB" id="FungiDB:YDR079C-A"/>
<dbReference type="eggNOG" id="KOG3451">
    <property type="taxonomic scope" value="Eukaryota"/>
</dbReference>
<dbReference type="HOGENOM" id="CLU_166246_3_1_1"/>
<dbReference type="InParanoid" id="Q3E7C1"/>
<dbReference type="OMA" id="IYNPMDE"/>
<dbReference type="OrthoDB" id="354at2759"/>
<dbReference type="BioCyc" id="YEAST:G3O-30109-MONOMER"/>
<dbReference type="Reactome" id="R-SCE-113418">
    <property type="pathway name" value="Formation of the Early Elongation Complex"/>
</dbReference>
<dbReference type="Reactome" id="R-SCE-674695">
    <property type="pathway name" value="RNA Polymerase II Pre-transcription Events"/>
</dbReference>
<dbReference type="Reactome" id="R-SCE-6781823">
    <property type="pathway name" value="Formation of TC-NER Pre-Incision Complex"/>
</dbReference>
<dbReference type="Reactome" id="R-SCE-6782135">
    <property type="pathway name" value="Dual incision in TC-NER"/>
</dbReference>
<dbReference type="Reactome" id="R-SCE-6782210">
    <property type="pathway name" value="Gap-filling DNA repair synthesis and ligation in TC-NER"/>
</dbReference>
<dbReference type="Reactome" id="R-SCE-6796648">
    <property type="pathway name" value="TP53 Regulates Transcription of DNA Repair Genes"/>
</dbReference>
<dbReference type="Reactome" id="R-SCE-72086">
    <property type="pathway name" value="mRNA Capping"/>
</dbReference>
<dbReference type="Reactome" id="R-SCE-73772">
    <property type="pathway name" value="RNA Polymerase I Promoter Escape"/>
</dbReference>
<dbReference type="Reactome" id="R-SCE-73776">
    <property type="pathway name" value="RNA Polymerase II Promoter Escape"/>
</dbReference>
<dbReference type="Reactome" id="R-SCE-73779">
    <property type="pathway name" value="RNA Polymerase II Transcription Pre-Initiation And Promoter Opening"/>
</dbReference>
<dbReference type="Reactome" id="R-SCE-75953">
    <property type="pathway name" value="RNA Polymerase II Transcription Initiation"/>
</dbReference>
<dbReference type="Reactome" id="R-SCE-76042">
    <property type="pathway name" value="RNA Polymerase II Transcription Initiation And Promoter Clearance"/>
</dbReference>
<dbReference type="Reactome" id="R-SCE-77075">
    <property type="pathway name" value="RNA Pol II CTD phosphorylation and interaction with CE"/>
</dbReference>
<dbReference type="BioGRID-ORCS" id="851652">
    <property type="hits" value="6 hits in 10 CRISPR screens"/>
</dbReference>
<dbReference type="EvolutionaryTrace" id="Q3E7C1"/>
<dbReference type="PRO" id="PR:Q3E7C1"/>
<dbReference type="Proteomes" id="UP000002311">
    <property type="component" value="Chromosome IV"/>
</dbReference>
<dbReference type="RNAct" id="Q3E7C1">
    <property type="molecule type" value="protein"/>
</dbReference>
<dbReference type="GO" id="GO:0005829">
    <property type="term" value="C:cytosol"/>
    <property type="evidence" value="ECO:0000314"/>
    <property type="project" value="SGD"/>
</dbReference>
<dbReference type="GO" id="GO:0005634">
    <property type="term" value="C:nucleus"/>
    <property type="evidence" value="ECO:0000314"/>
    <property type="project" value="SGD"/>
</dbReference>
<dbReference type="GO" id="GO:0000439">
    <property type="term" value="C:transcription factor TFIIH core complex"/>
    <property type="evidence" value="ECO:0000353"/>
    <property type="project" value="SGD"/>
</dbReference>
<dbReference type="GO" id="GO:0005675">
    <property type="term" value="C:transcription factor TFIIH holo complex"/>
    <property type="evidence" value="ECO:0000314"/>
    <property type="project" value="SGD"/>
</dbReference>
<dbReference type="GO" id="GO:0006289">
    <property type="term" value="P:nucleotide-excision repair"/>
    <property type="evidence" value="ECO:0000314"/>
    <property type="project" value="ComplexPortal"/>
</dbReference>
<dbReference type="GO" id="GO:0006294">
    <property type="term" value="P:nucleotide-excision repair, preincision complex assembly"/>
    <property type="evidence" value="ECO:0000318"/>
    <property type="project" value="GO_Central"/>
</dbReference>
<dbReference type="GO" id="GO:0006366">
    <property type="term" value="P:transcription by RNA polymerase II"/>
    <property type="evidence" value="ECO:0000314"/>
    <property type="project" value="SGD"/>
</dbReference>
<dbReference type="GO" id="GO:0006367">
    <property type="term" value="P:transcription initiation at RNA polymerase II promoter"/>
    <property type="evidence" value="ECO:0000314"/>
    <property type="project" value="ComplexPortal"/>
</dbReference>
<dbReference type="FunFam" id="3.30.70.1220:FF:000002">
    <property type="entry name" value="RNA polymerase II transcription factor B subunit 5"/>
    <property type="match status" value="1"/>
</dbReference>
<dbReference type="Gene3D" id="3.30.70.1220">
    <property type="entry name" value="TFB5-like"/>
    <property type="match status" value="1"/>
</dbReference>
<dbReference type="InterPro" id="IPR035935">
    <property type="entry name" value="TFB5-like_sf"/>
</dbReference>
<dbReference type="InterPro" id="IPR009400">
    <property type="entry name" value="TFIIH_TTDA/Tfb5"/>
</dbReference>
<dbReference type="PANTHER" id="PTHR28580">
    <property type="entry name" value="GENERAL TRANSCRIPTION FACTOR IIH SUBUNIT 5"/>
    <property type="match status" value="1"/>
</dbReference>
<dbReference type="PANTHER" id="PTHR28580:SF1">
    <property type="entry name" value="GENERAL TRANSCRIPTION FACTOR IIH SUBUNIT 5"/>
    <property type="match status" value="1"/>
</dbReference>
<dbReference type="Pfam" id="PF06331">
    <property type="entry name" value="Tfb5"/>
    <property type="match status" value="1"/>
</dbReference>
<dbReference type="SMART" id="SM01395">
    <property type="entry name" value="Tbf5"/>
    <property type="match status" value="1"/>
</dbReference>
<dbReference type="SUPFAM" id="SSF142897">
    <property type="entry name" value="TFB5-like"/>
    <property type="match status" value="1"/>
</dbReference>
<comment type="function">
    <text evidence="5 6">Component of the general transcription and DNA repair factor IIH (TFIIH) core complex, which is involved in general and transcription-coupled nucleotide excision repair (NER) of damaged DNA and, when complexed to TFIIK, in RNA transcription by RNA polymerase II. In NER, TFIIH acts by opening DNA around the lesion to allow the excision of the damaged oligonucleotide and its replacement by a new DNA fragment. In transcription, TFIIH has an essential role in transcription initiation. When the pre-initiation complex (PIC) has been established, TFIIH is required for promoter opening and promoter escape. Phosphorylation of the C-terminal tail (CTD) of the largest subunit of RNA polymerase II by the kinase module TFIIK controls the initiation of transcription. TFB5 is required for stable recruitment of TFIIH to a promoter, but not for stability of TFIIH subunits.</text>
</comment>
<comment type="subunit">
    <text evidence="2 3 4">Component of the 7-subunit TFIIH core complex composed of XPB/SSL2, XPD/RAD3, SSL1, TFB1, TFB2, TFB4 and TFB5, which is active in NER. The core complex associates with the 3-subunit CTD-kinase module TFIIK composed of CCL1, KIN28 and TFB3 to form the 10-subunit holoenzyme (holo-TFIIH) active in transcription (PubMed:15220919). An additionnal subunit, TFB6, plays a role in the dissociation of the SSL2 helicase from TFIIH after transcription initiation (PubMed:22411836). Interacts with TFB2 (PubMed:19172752).</text>
</comment>
<comment type="interaction">
    <interactant intactId="EBI-2095127">
        <id>Q3E7C1</id>
    </interactant>
    <interactant intactId="EBI-2345544">
        <id>Q02939</id>
        <label>TFB2</label>
    </interactant>
    <organismsDiffer>false</organismsDiffer>
    <experiments>7</experiments>
</comment>
<comment type="subcellular location">
    <subcellularLocation>
        <location evidence="1">Nucleus</location>
    </subcellularLocation>
</comment>
<comment type="similarity">
    <text evidence="7">Belongs to the TFB5 family.</text>
</comment>
<feature type="chain" id="PRO_0000119287" description="General transcription and DNA repair factor IIH subunit TFB5">
    <location>
        <begin position="1"/>
        <end position="72"/>
    </location>
</feature>
<feature type="strand" evidence="8">
    <location>
        <begin position="3"/>
        <end position="11"/>
    </location>
</feature>
<feature type="helix" evidence="8">
    <location>
        <begin position="14"/>
        <end position="27"/>
    </location>
</feature>
<feature type="strand" evidence="8">
    <location>
        <begin position="29"/>
        <end position="36"/>
    </location>
</feature>
<feature type="strand" evidence="8">
    <location>
        <begin position="39"/>
        <end position="42"/>
    </location>
</feature>
<feature type="helix" evidence="8">
    <location>
        <begin position="44"/>
        <end position="46"/>
    </location>
</feature>
<feature type="helix" evidence="8">
    <location>
        <begin position="47"/>
        <end position="59"/>
    </location>
</feature>
<accession>Q3E7C1</accession>
<accession>D6VS66</accession>
<name>TFB5_YEAST</name>